<name>TNFB_MARMO</name>
<protein>
    <recommendedName>
        <fullName>Lymphotoxin-alpha</fullName>
        <shortName>LT-alpha</shortName>
    </recommendedName>
    <alternativeName>
        <fullName>TNF-beta</fullName>
    </alternativeName>
    <alternativeName>
        <fullName>Tumor necrosis factor ligand superfamily member 1</fullName>
    </alternativeName>
</protein>
<gene>
    <name type="primary">LTA</name>
    <name type="synonym">TNFB</name>
    <name type="synonym">TNFSF1</name>
</gene>
<reference key="1">
    <citation type="journal article" date="2000" name="Gene">
        <title>Woodchuck lymphotoxin-alpha, -beta and tumor necrosis factor genes: structure, characterization and biological activity.</title>
        <authorList>
            <person name="Li D.H."/>
            <person name="Havell E.A."/>
            <person name="Brown C.L."/>
            <person name="Cullen J.M."/>
        </authorList>
    </citation>
    <scope>NUCLEOTIDE SEQUENCE [GENOMIC DNA / MRNA]</scope>
    <source>
        <tissue>Blood</tissue>
    </source>
</reference>
<accession>Q9JM09</accession>
<accession>Q9JM12</accession>
<proteinExistence type="evidence at transcript level"/>
<sequence>MTPPGRLYLPRVRGTRLLFLLLGLLLALPPRAKGLPGVGLLPSAARAAQQHPQKHFAHGTLKPAAHLVGDPSMQNSLRWRANTDRAFLRHGFSLSNNSLLVPTSGLYFVYSQVVFSGEGCSSKAVSTPLYLAHEVQLFSSQYPFHVPLLSAQKSVCPGPQGPWVRSVYQGAVFLLTRGDQLSTHTDGISHLLFSPSSVFFGAFAL</sequence>
<organism>
    <name type="scientific">Marmota monax</name>
    <name type="common">Woodchuck</name>
    <dbReference type="NCBI Taxonomy" id="9995"/>
    <lineage>
        <taxon>Eukaryota</taxon>
        <taxon>Metazoa</taxon>
        <taxon>Chordata</taxon>
        <taxon>Craniata</taxon>
        <taxon>Vertebrata</taxon>
        <taxon>Euteleostomi</taxon>
        <taxon>Mammalia</taxon>
        <taxon>Eutheria</taxon>
        <taxon>Euarchontoglires</taxon>
        <taxon>Glires</taxon>
        <taxon>Rodentia</taxon>
        <taxon>Sciuromorpha</taxon>
        <taxon>Sciuridae</taxon>
        <taxon>Xerinae</taxon>
        <taxon>Marmotini</taxon>
        <taxon>Marmota</taxon>
    </lineage>
</organism>
<keyword id="KW-0202">Cytokine</keyword>
<keyword id="KW-1015">Disulfide bond</keyword>
<keyword id="KW-0325">Glycoprotein</keyword>
<keyword id="KW-0472">Membrane</keyword>
<keyword id="KW-0964">Secreted</keyword>
<keyword id="KW-0732">Signal</keyword>
<feature type="signal peptide" evidence="1">
    <location>
        <begin position="1"/>
        <end position="34"/>
    </location>
</feature>
<feature type="chain" id="PRO_0000034466" description="Lymphotoxin-alpha">
    <location>
        <begin position="35"/>
        <end position="205"/>
    </location>
</feature>
<feature type="domain" description="THD" evidence="4">
    <location>
        <begin position="63"/>
        <end position="205"/>
    </location>
</feature>
<feature type="glycosylation site" description="N-linked (GlcNAc...) asparagine" evidence="3">
    <location>
        <position position="96"/>
    </location>
</feature>
<feature type="disulfide bond" evidence="4">
    <location>
        <begin position="120"/>
        <end position="156"/>
    </location>
</feature>
<feature type="sequence conflict" description="In Ref. 1; AAF34864." evidence="5" ref="1">
    <original>R</original>
    <variation>W</variation>
    <location>
        <position position="46"/>
    </location>
</feature>
<dbReference type="EMBL" id="AF096268">
    <property type="protein sequence ID" value="AAF34868.1"/>
    <property type="molecule type" value="Genomic_DNA"/>
</dbReference>
<dbReference type="EMBL" id="AF095586">
    <property type="protein sequence ID" value="AAF34864.1"/>
    <property type="molecule type" value="mRNA"/>
</dbReference>
<dbReference type="SMR" id="Q9JM09"/>
<dbReference type="GlyCosmos" id="Q9JM09">
    <property type="glycosylation" value="1 site, No reported glycans"/>
</dbReference>
<dbReference type="GO" id="GO:0005615">
    <property type="term" value="C:extracellular space"/>
    <property type="evidence" value="ECO:0007669"/>
    <property type="project" value="UniProtKB-KW"/>
</dbReference>
<dbReference type="GO" id="GO:0016020">
    <property type="term" value="C:membrane"/>
    <property type="evidence" value="ECO:0007669"/>
    <property type="project" value="UniProtKB-SubCell"/>
</dbReference>
<dbReference type="GO" id="GO:0005125">
    <property type="term" value="F:cytokine activity"/>
    <property type="evidence" value="ECO:0007669"/>
    <property type="project" value="UniProtKB-KW"/>
</dbReference>
<dbReference type="GO" id="GO:0005164">
    <property type="term" value="F:tumor necrosis factor receptor binding"/>
    <property type="evidence" value="ECO:0007669"/>
    <property type="project" value="InterPro"/>
</dbReference>
<dbReference type="GO" id="GO:0006955">
    <property type="term" value="P:immune response"/>
    <property type="evidence" value="ECO:0007669"/>
    <property type="project" value="InterPro"/>
</dbReference>
<dbReference type="GO" id="GO:0043123">
    <property type="term" value="P:positive regulation of canonical NF-kappaB signal transduction"/>
    <property type="evidence" value="ECO:0007669"/>
    <property type="project" value="TreeGrafter"/>
</dbReference>
<dbReference type="GO" id="GO:2001238">
    <property type="term" value="P:positive regulation of extrinsic apoptotic signaling pathway"/>
    <property type="evidence" value="ECO:0007669"/>
    <property type="project" value="TreeGrafter"/>
</dbReference>
<dbReference type="CDD" id="cd00184">
    <property type="entry name" value="TNF"/>
    <property type="match status" value="1"/>
</dbReference>
<dbReference type="FunFam" id="2.60.120.40:FF:000016">
    <property type="entry name" value="Tumor necrosis factor"/>
    <property type="match status" value="1"/>
</dbReference>
<dbReference type="Gene3D" id="2.60.120.40">
    <property type="match status" value="1"/>
</dbReference>
<dbReference type="InterPro" id="IPR006053">
    <property type="entry name" value="TNF"/>
</dbReference>
<dbReference type="InterPro" id="IPR002960">
    <property type="entry name" value="TNF_beta"/>
</dbReference>
<dbReference type="InterPro" id="IPR021184">
    <property type="entry name" value="TNF_CS"/>
</dbReference>
<dbReference type="InterPro" id="IPR006052">
    <property type="entry name" value="TNF_dom"/>
</dbReference>
<dbReference type="InterPro" id="IPR008983">
    <property type="entry name" value="Tumour_necrosis_fac-like_dom"/>
</dbReference>
<dbReference type="PANTHER" id="PTHR11471:SF31">
    <property type="entry name" value="LYMPHOTOXIN-ALPHA"/>
    <property type="match status" value="1"/>
</dbReference>
<dbReference type="PANTHER" id="PTHR11471">
    <property type="entry name" value="TUMOR NECROSIS FACTOR FAMILY MEMBER"/>
    <property type="match status" value="1"/>
</dbReference>
<dbReference type="Pfam" id="PF00229">
    <property type="entry name" value="TNF"/>
    <property type="match status" value="1"/>
</dbReference>
<dbReference type="PRINTS" id="PR01234">
    <property type="entry name" value="TNECROSISFCT"/>
</dbReference>
<dbReference type="PRINTS" id="PR01236">
    <property type="entry name" value="TNFBETA"/>
</dbReference>
<dbReference type="SMART" id="SM00207">
    <property type="entry name" value="TNF"/>
    <property type="match status" value="1"/>
</dbReference>
<dbReference type="SUPFAM" id="SSF49842">
    <property type="entry name" value="TNF-like"/>
    <property type="match status" value="1"/>
</dbReference>
<dbReference type="PROSITE" id="PS00251">
    <property type="entry name" value="THD_1"/>
    <property type="match status" value="1"/>
</dbReference>
<dbReference type="PROSITE" id="PS50049">
    <property type="entry name" value="THD_2"/>
    <property type="match status" value="1"/>
</dbReference>
<comment type="function">
    <text evidence="2">Cytokine that in its homotrimeric form binds to TNFRSF1A/TNFR1, TNFRSF1B/TNFBR and TNFRSF14/HVEM (By similarity). In its heterotrimeric form with LTB binds to TNFRSF3/LTBR. Lymphotoxin is produced by lymphocytes and is cytotoxic for a wide range of tumor cells in vitro and in vivo.</text>
</comment>
<comment type="subunit">
    <text evidence="2">Homotrimer, and heterotrimer of either two LTB and one LTA subunits or (less prevalent) two LTA and one LTB subunits. Interacts with TNFRSF14.</text>
</comment>
<comment type="subcellular location">
    <subcellularLocation>
        <location evidence="1">Secreted</location>
    </subcellularLocation>
    <subcellularLocation>
        <location evidence="1">Membrane</location>
    </subcellularLocation>
    <text evidence="1">The homotrimer is secreted. The heterotrimer is membrane-associated.</text>
</comment>
<comment type="similarity">
    <text evidence="5">Belongs to the tumor necrosis factor family.</text>
</comment>
<evidence type="ECO:0000250" key="1"/>
<evidence type="ECO:0000250" key="2">
    <source>
        <dbReference type="UniProtKB" id="P01374"/>
    </source>
</evidence>
<evidence type="ECO:0000255" key="3"/>
<evidence type="ECO:0000255" key="4">
    <source>
        <dbReference type="PROSITE-ProRule" id="PRU01387"/>
    </source>
</evidence>
<evidence type="ECO:0000305" key="5"/>